<name>CEP3_HCMVM</name>
<organism>
    <name type="scientific">Human cytomegalovirus (strain Merlin)</name>
    <name type="common">HHV-5</name>
    <name type="synonym">Human herpesvirus 5</name>
    <dbReference type="NCBI Taxonomy" id="295027"/>
    <lineage>
        <taxon>Viruses</taxon>
        <taxon>Duplodnaviria</taxon>
        <taxon>Heunggongvirae</taxon>
        <taxon>Peploviricota</taxon>
        <taxon>Herviviricetes</taxon>
        <taxon>Herpesvirales</taxon>
        <taxon>Orthoherpesviridae</taxon>
        <taxon>Betaherpesvirinae</taxon>
        <taxon>Cytomegalovirus</taxon>
        <taxon>Cytomegalovirus humanbeta5</taxon>
        <taxon>Human cytomegalovirus</taxon>
    </lineage>
</organism>
<proteinExistence type="inferred from homology"/>
<reference key="1">
    <citation type="journal article" date="2004" name="J. Gen. Virol.">
        <title>Genetic content of wild-type human cytomegalovirus.</title>
        <authorList>
            <person name="Dolan A."/>
            <person name="Cunningham C."/>
            <person name="Hector R.D."/>
            <person name="Hassan-Walker A.F."/>
            <person name="Lee L."/>
            <person name="Addison C."/>
            <person name="Dargan D.J."/>
            <person name="McGeoch D.J."/>
            <person name="Gatherer D."/>
            <person name="Emery V.C."/>
            <person name="Griffiths P.D."/>
            <person name="Sinzger C."/>
            <person name="McSharry B.P."/>
            <person name="Wilkinson G.W.G."/>
            <person name="Davison A.J."/>
        </authorList>
    </citation>
    <scope>NUCLEOTIDE SEQUENCE [LARGE SCALE GENOMIC DNA]</scope>
</reference>
<feature type="initiator methionine" description="Removed; by host" evidence="1">
    <location>
        <position position="1"/>
    </location>
</feature>
<feature type="chain" id="PRO_0000418277" description="Cytoplasmic envelopment protein 3" evidence="1">
    <location>
        <begin position="2"/>
        <end position="190"/>
    </location>
</feature>
<feature type="region of interest" description="Disordered" evidence="2">
    <location>
        <begin position="14"/>
        <end position="190"/>
    </location>
</feature>
<feature type="compositionally biased region" description="Polar residues" evidence="2">
    <location>
        <begin position="30"/>
        <end position="43"/>
    </location>
</feature>
<feature type="compositionally biased region" description="Acidic residues" evidence="2">
    <location>
        <begin position="44"/>
        <end position="58"/>
    </location>
</feature>
<feature type="compositionally biased region" description="Basic and acidic residues" evidence="2">
    <location>
        <begin position="80"/>
        <end position="90"/>
    </location>
</feature>
<feature type="compositionally biased region" description="Basic residues" evidence="2">
    <location>
        <begin position="108"/>
        <end position="123"/>
    </location>
</feature>
<feature type="compositionally biased region" description="Acidic residues" evidence="2">
    <location>
        <begin position="130"/>
        <end position="139"/>
    </location>
</feature>
<feature type="lipid moiety-binding region" description="N-myristoyl glycine; by host" evidence="1">
    <location>
        <position position="2"/>
    </location>
</feature>
<accession>F5HI87</accession>
<protein>
    <recommendedName>
        <fullName evidence="1">Cytoplasmic envelopment protein 3</fullName>
    </recommendedName>
    <alternativeName>
        <fullName>28 kDa structural phosphoprotein</fullName>
    </alternativeName>
    <alternativeName>
        <fullName>pp28</fullName>
    </alternativeName>
</protein>
<gene>
    <name type="primary">UL99</name>
</gene>
<organismHost>
    <name type="scientific">Homo sapiens</name>
    <name type="common">Human</name>
    <dbReference type="NCBI Taxonomy" id="9606"/>
</organismHost>
<evidence type="ECO:0000255" key="1">
    <source>
        <dbReference type="HAMAP-Rule" id="MF_04041"/>
    </source>
</evidence>
<evidence type="ECO:0000256" key="2">
    <source>
        <dbReference type="SAM" id="MobiDB-lite"/>
    </source>
</evidence>
<sequence length="190" mass="20923">MGAELCKRICCEFGTTSGEPLKDALGRQVSLRSYDNIPPTSSSDEGEDDDDGEDDDNEERQQKLRLCGSGCGGNDSSSGSHREATHDGPKKNAVRSTFREDKAPKPSKQSKKKKKPSKHHHHQQSSIMQETDDLDEEDTSIYLSPPPVPPVQVVAKRLPRPDTPRTPRQKKISQRPPTPGTKKPAASLPF</sequence>
<dbReference type="EMBL" id="AY446894">
    <property type="protein sequence ID" value="AAR31650.1"/>
    <property type="molecule type" value="Genomic_DNA"/>
</dbReference>
<dbReference type="RefSeq" id="YP_081546.1">
    <property type="nucleotide sequence ID" value="NC_006273.2"/>
</dbReference>
<dbReference type="DNASU" id="3077533"/>
<dbReference type="GeneID" id="3077533"/>
<dbReference type="KEGG" id="vg:3077533"/>
<dbReference type="Reactome" id="R-HSA-9609690">
    <property type="pathway name" value="HCMV Early Events"/>
</dbReference>
<dbReference type="Reactome" id="R-HSA-9610379">
    <property type="pathway name" value="HCMV Late Events"/>
</dbReference>
<dbReference type="Proteomes" id="UP000000938">
    <property type="component" value="Segment"/>
</dbReference>
<dbReference type="GO" id="GO:0044178">
    <property type="term" value="C:host cell Golgi membrane"/>
    <property type="evidence" value="ECO:0007669"/>
    <property type="project" value="UniProtKB-SubCell"/>
</dbReference>
<dbReference type="GO" id="GO:0020002">
    <property type="term" value="C:host cell plasma membrane"/>
    <property type="evidence" value="ECO:0007669"/>
    <property type="project" value="UniProtKB-SubCell"/>
</dbReference>
<dbReference type="GO" id="GO:0072517">
    <property type="term" value="C:host cell viral assembly compartment"/>
    <property type="evidence" value="ECO:0000304"/>
    <property type="project" value="Reactome"/>
</dbReference>
<dbReference type="GO" id="GO:0016020">
    <property type="term" value="C:membrane"/>
    <property type="evidence" value="ECO:0007669"/>
    <property type="project" value="UniProtKB-KW"/>
</dbReference>
<dbReference type="GO" id="GO:0019033">
    <property type="term" value="C:viral tegument"/>
    <property type="evidence" value="ECO:0000304"/>
    <property type="project" value="Reactome"/>
</dbReference>
<dbReference type="GO" id="GO:0055036">
    <property type="term" value="C:virion membrane"/>
    <property type="evidence" value="ECO:0007669"/>
    <property type="project" value="UniProtKB-SubCell"/>
</dbReference>
<dbReference type="GO" id="GO:0046760">
    <property type="term" value="P:viral budding from Golgi membrane"/>
    <property type="evidence" value="ECO:0000314"/>
    <property type="project" value="UniProtKB"/>
</dbReference>
<dbReference type="GO" id="GO:0039702">
    <property type="term" value="P:viral budding via host ESCRT complex"/>
    <property type="evidence" value="ECO:0000314"/>
    <property type="project" value="UniProtKB"/>
</dbReference>
<dbReference type="HAMAP" id="MF_04041">
    <property type="entry name" value="HSV_CEP3_betahv"/>
    <property type="match status" value="1"/>
</dbReference>
<dbReference type="InterPro" id="IPR034705">
    <property type="entry name" value="HSV_CEP3_betahv"/>
</dbReference>
<keyword id="KW-1032">Host cell membrane</keyword>
<keyword id="KW-1040">Host Golgi apparatus</keyword>
<keyword id="KW-1043">Host membrane</keyword>
<keyword id="KW-0449">Lipoprotein</keyword>
<keyword id="KW-0472">Membrane</keyword>
<keyword id="KW-0519">Myristate</keyword>
<keyword id="KW-0564">Palmitate</keyword>
<keyword id="KW-0597">Phosphoprotein</keyword>
<keyword id="KW-1185">Reference proteome</keyword>
<keyword id="KW-0946">Virion</keyword>
<keyword id="KW-0920">Virion tegument</keyword>
<comment type="function">
    <text evidence="1">Plays an important role in the cytoplasmic envelopment of tegument proteins and capsids during the assembly and egress processes. Also participates in viral entry at the fusion step probably by regulating the core fusion machinery.</text>
</comment>
<comment type="subunit">
    <text evidence="1">Interacts with cytoplasmic envelopment protein 2; this interaction is essential for the proper localization of each protein to the assembly complex and thus for the production of infectious virus.</text>
</comment>
<comment type="subcellular location">
    <subcellularLocation>
        <location evidence="1">Virion tegument</location>
    </subcellularLocation>
    <subcellularLocation>
        <location evidence="1">Virion membrane</location>
        <topology evidence="1">Lipid-anchor</topology>
    </subcellularLocation>
    <subcellularLocation>
        <location evidence="1">Host cell membrane</location>
        <topology evidence="1">Lipid-anchor</topology>
        <orientation evidence="1">Cytoplasmic side</orientation>
    </subcellularLocation>
    <subcellularLocation>
        <location evidence="1">Host Golgi apparatus membrane</location>
        <topology evidence="1">Lipid-anchor</topology>
        <orientation evidence="1">Cytoplasmic side</orientation>
    </subcellularLocation>
    <text evidence="1">Virion membrane-associated tegument protein. Associates with host membrane lipids rafts. During virion morphogenesis, this protein probably accumulates in the endosomes and trans-Golgi where secondary envelopment occurs. It is probably transported to the cell surface from where it is endocytosed and directed to the trans-Golgi network (TGN).</text>
</comment>
<comment type="PTM">
    <text evidence="1">Myristoylation and palmitoylation (probably on one or more of the nearby cysteines at the N-terminus) enable membrane-binding and Golgi apparatus-specific targeting and are essential for efficient packaging.</text>
</comment>
<comment type="PTM">
    <text evidence="1">Phosphorylated. Phosphorylation does not seem to be required for recycling to the host Golgi apparatus. Packaging is selective for underphosphorylated forms.</text>
</comment>
<comment type="similarity">
    <text evidence="1">Belongs to the herpesviridae cytoplasmic envelopment protein 3 family.</text>
</comment>